<evidence type="ECO:0000250" key="1">
    <source>
        <dbReference type="UniProtKB" id="Q9NXW9"/>
    </source>
</evidence>
<evidence type="ECO:0000255" key="2">
    <source>
        <dbReference type="PROSITE-ProRule" id="PRU00805"/>
    </source>
</evidence>
<evidence type="ECO:0000269" key="3">
    <source>
    </source>
</evidence>
<evidence type="ECO:0000269" key="4">
    <source>
    </source>
</evidence>
<evidence type="ECO:0000269" key="5">
    <source>
    </source>
</evidence>
<evidence type="ECO:0000303" key="6">
    <source>
    </source>
</evidence>
<evidence type="ECO:0000303" key="7">
    <source>
    </source>
</evidence>
<evidence type="ECO:0000305" key="8"/>
<evidence type="ECO:0000312" key="9">
    <source>
        <dbReference type="MGI" id="MGI:1919291"/>
    </source>
</evidence>
<comment type="function">
    <text evidence="1 5">Dioxygenase that mediates demethylation of actin monomethylated at 'Lys-84' (K84me1), thereby acting as a regulator of actomyosin-processes (By similarity). Demethylation of actin K84me1 is required for maintaining actomyosin dynamics supporting normal cleavage furrow ingression during cytokinesis and cell migration (By similarity). In addition to proteins, also demethylates DNA: specifically demethylates DNA methylated on the 6th position of adenine (N(6)-methyladenosine) DNA, thereby regulating Polycomb silencing (PubMed:30982744).</text>
</comment>
<comment type="catalytic activity">
    <reaction evidence="5">
        <text>an N(6)-methyl-2'-deoxyadenosine in DNA + 2-oxoglutarate + O2 = a 2'-deoxyadenosine in DNA + formaldehyde + succinate + CO2</text>
        <dbReference type="Rhea" id="RHEA:49524"/>
        <dbReference type="Rhea" id="RHEA-COMP:12418"/>
        <dbReference type="Rhea" id="RHEA-COMP:12419"/>
        <dbReference type="ChEBI" id="CHEBI:15379"/>
        <dbReference type="ChEBI" id="CHEBI:16526"/>
        <dbReference type="ChEBI" id="CHEBI:16810"/>
        <dbReference type="ChEBI" id="CHEBI:16842"/>
        <dbReference type="ChEBI" id="CHEBI:30031"/>
        <dbReference type="ChEBI" id="CHEBI:90615"/>
        <dbReference type="ChEBI" id="CHEBI:90616"/>
        <dbReference type="EC" id="1.14.11.51"/>
    </reaction>
    <physiologicalReaction direction="left-to-right" evidence="5">
        <dbReference type="Rhea" id="RHEA:49525"/>
    </physiologicalReaction>
</comment>
<comment type="catalytic activity">
    <reaction evidence="1">
        <text>N(6)-methyl-L-lysyl-[protein] + 2-oxoglutarate + O2 = L-lysyl-[protein] + formaldehyde + succinate + CO2</text>
        <dbReference type="Rhea" id="RHEA:60924"/>
        <dbReference type="Rhea" id="RHEA-COMP:9752"/>
        <dbReference type="Rhea" id="RHEA-COMP:13053"/>
        <dbReference type="ChEBI" id="CHEBI:15379"/>
        <dbReference type="ChEBI" id="CHEBI:16526"/>
        <dbReference type="ChEBI" id="CHEBI:16810"/>
        <dbReference type="ChEBI" id="CHEBI:16842"/>
        <dbReference type="ChEBI" id="CHEBI:29969"/>
        <dbReference type="ChEBI" id="CHEBI:30031"/>
        <dbReference type="ChEBI" id="CHEBI:61929"/>
    </reaction>
    <physiologicalReaction direction="left-to-right" evidence="1">
        <dbReference type="Rhea" id="RHEA:60925"/>
    </physiologicalReaction>
</comment>
<comment type="cofactor">
    <cofactor evidence="5">
        <name>Fe(2+)</name>
        <dbReference type="ChEBI" id="CHEBI:29033"/>
    </cofactor>
    <text evidence="1">Binds 1 Fe(2+) ion per subunit.</text>
</comment>
<comment type="subunit">
    <text evidence="1">Interacts with ZFHX3, MLLT3, MLLT1, HSF4, EP300, TES, EIF3C, MTMR6 and PSMA6.</text>
</comment>
<comment type="subcellular location">
    <subcellularLocation>
        <location evidence="1">Cytoplasm</location>
    </subcellularLocation>
    <subcellularLocation>
        <location evidence="4">Nucleus</location>
    </subcellularLocation>
    <subcellularLocation>
        <location evidence="4">Nucleus</location>
        <location evidence="4">Nucleolus</location>
    </subcellularLocation>
    <subcellularLocation>
        <location evidence="1">Midbody</location>
    </subcellularLocation>
    <text evidence="1">Associates with the contractile ring and midbody.</text>
</comment>
<comment type="alternative products">
    <event type="alternative splicing"/>
    <isoform>
        <id>Q9D8F1-1</id>
        <name>1</name>
        <sequence type="displayed"/>
    </isoform>
    <isoform>
        <id>Q9D8F1-2</id>
        <name>2</name>
        <sequence type="described" ref="VSP_019129"/>
    </isoform>
</comment>
<comment type="disruption phenotype">
    <text evidence="3 4">Embryonic lethality (PubMed:23673617). Conditional deletion in developing juvenile mice leads to spermatogenic defects (PubMed:25153837).</text>
</comment>
<comment type="similarity">
    <text evidence="8">Belongs to the alkB family.</text>
</comment>
<reference key="1">
    <citation type="journal article" date="2005" name="Science">
        <title>The transcriptional landscape of the mammalian genome.</title>
        <authorList>
            <person name="Carninci P."/>
            <person name="Kasukawa T."/>
            <person name="Katayama S."/>
            <person name="Gough J."/>
            <person name="Frith M.C."/>
            <person name="Maeda N."/>
            <person name="Oyama R."/>
            <person name="Ravasi T."/>
            <person name="Lenhard B."/>
            <person name="Wells C."/>
            <person name="Kodzius R."/>
            <person name="Shimokawa K."/>
            <person name="Bajic V.B."/>
            <person name="Brenner S.E."/>
            <person name="Batalov S."/>
            <person name="Forrest A.R."/>
            <person name="Zavolan M."/>
            <person name="Davis M.J."/>
            <person name="Wilming L.G."/>
            <person name="Aidinis V."/>
            <person name="Allen J.E."/>
            <person name="Ambesi-Impiombato A."/>
            <person name="Apweiler R."/>
            <person name="Aturaliya R.N."/>
            <person name="Bailey T.L."/>
            <person name="Bansal M."/>
            <person name="Baxter L."/>
            <person name="Beisel K.W."/>
            <person name="Bersano T."/>
            <person name="Bono H."/>
            <person name="Chalk A.M."/>
            <person name="Chiu K.P."/>
            <person name="Choudhary V."/>
            <person name="Christoffels A."/>
            <person name="Clutterbuck D.R."/>
            <person name="Crowe M.L."/>
            <person name="Dalla E."/>
            <person name="Dalrymple B.P."/>
            <person name="de Bono B."/>
            <person name="Della Gatta G."/>
            <person name="di Bernardo D."/>
            <person name="Down T."/>
            <person name="Engstrom P."/>
            <person name="Fagiolini M."/>
            <person name="Faulkner G."/>
            <person name="Fletcher C.F."/>
            <person name="Fukushima T."/>
            <person name="Furuno M."/>
            <person name="Futaki S."/>
            <person name="Gariboldi M."/>
            <person name="Georgii-Hemming P."/>
            <person name="Gingeras T.R."/>
            <person name="Gojobori T."/>
            <person name="Green R.E."/>
            <person name="Gustincich S."/>
            <person name="Harbers M."/>
            <person name="Hayashi Y."/>
            <person name="Hensch T.K."/>
            <person name="Hirokawa N."/>
            <person name="Hill D."/>
            <person name="Huminiecki L."/>
            <person name="Iacono M."/>
            <person name="Ikeo K."/>
            <person name="Iwama A."/>
            <person name="Ishikawa T."/>
            <person name="Jakt M."/>
            <person name="Kanapin A."/>
            <person name="Katoh M."/>
            <person name="Kawasawa Y."/>
            <person name="Kelso J."/>
            <person name="Kitamura H."/>
            <person name="Kitano H."/>
            <person name="Kollias G."/>
            <person name="Krishnan S.P."/>
            <person name="Kruger A."/>
            <person name="Kummerfeld S.K."/>
            <person name="Kurochkin I.V."/>
            <person name="Lareau L.F."/>
            <person name="Lazarevic D."/>
            <person name="Lipovich L."/>
            <person name="Liu J."/>
            <person name="Liuni S."/>
            <person name="McWilliam S."/>
            <person name="Madan Babu M."/>
            <person name="Madera M."/>
            <person name="Marchionni L."/>
            <person name="Matsuda H."/>
            <person name="Matsuzawa S."/>
            <person name="Miki H."/>
            <person name="Mignone F."/>
            <person name="Miyake S."/>
            <person name="Morris K."/>
            <person name="Mottagui-Tabar S."/>
            <person name="Mulder N."/>
            <person name="Nakano N."/>
            <person name="Nakauchi H."/>
            <person name="Ng P."/>
            <person name="Nilsson R."/>
            <person name="Nishiguchi S."/>
            <person name="Nishikawa S."/>
            <person name="Nori F."/>
            <person name="Ohara O."/>
            <person name="Okazaki Y."/>
            <person name="Orlando V."/>
            <person name="Pang K.C."/>
            <person name="Pavan W.J."/>
            <person name="Pavesi G."/>
            <person name="Pesole G."/>
            <person name="Petrovsky N."/>
            <person name="Piazza S."/>
            <person name="Reed J."/>
            <person name="Reid J.F."/>
            <person name="Ring B.Z."/>
            <person name="Ringwald M."/>
            <person name="Rost B."/>
            <person name="Ruan Y."/>
            <person name="Salzberg S.L."/>
            <person name="Sandelin A."/>
            <person name="Schneider C."/>
            <person name="Schoenbach C."/>
            <person name="Sekiguchi K."/>
            <person name="Semple C.A."/>
            <person name="Seno S."/>
            <person name="Sessa L."/>
            <person name="Sheng Y."/>
            <person name="Shibata Y."/>
            <person name="Shimada H."/>
            <person name="Shimada K."/>
            <person name="Silva D."/>
            <person name="Sinclair B."/>
            <person name="Sperling S."/>
            <person name="Stupka E."/>
            <person name="Sugiura K."/>
            <person name="Sultana R."/>
            <person name="Takenaka Y."/>
            <person name="Taki K."/>
            <person name="Tammoja K."/>
            <person name="Tan S.L."/>
            <person name="Tang S."/>
            <person name="Taylor M.S."/>
            <person name="Tegner J."/>
            <person name="Teichmann S.A."/>
            <person name="Ueda H.R."/>
            <person name="van Nimwegen E."/>
            <person name="Verardo R."/>
            <person name="Wei C.L."/>
            <person name="Yagi K."/>
            <person name="Yamanishi H."/>
            <person name="Zabarovsky E."/>
            <person name="Zhu S."/>
            <person name="Zimmer A."/>
            <person name="Hide W."/>
            <person name="Bult C."/>
            <person name="Grimmond S.M."/>
            <person name="Teasdale R.D."/>
            <person name="Liu E.T."/>
            <person name="Brusic V."/>
            <person name="Quackenbush J."/>
            <person name="Wahlestedt C."/>
            <person name="Mattick J.S."/>
            <person name="Hume D.A."/>
            <person name="Kai C."/>
            <person name="Sasaki D."/>
            <person name="Tomaru Y."/>
            <person name="Fukuda S."/>
            <person name="Kanamori-Katayama M."/>
            <person name="Suzuki M."/>
            <person name="Aoki J."/>
            <person name="Arakawa T."/>
            <person name="Iida J."/>
            <person name="Imamura K."/>
            <person name="Itoh M."/>
            <person name="Kato T."/>
            <person name="Kawaji H."/>
            <person name="Kawagashira N."/>
            <person name="Kawashima T."/>
            <person name="Kojima M."/>
            <person name="Kondo S."/>
            <person name="Konno H."/>
            <person name="Nakano K."/>
            <person name="Ninomiya N."/>
            <person name="Nishio T."/>
            <person name="Okada M."/>
            <person name="Plessy C."/>
            <person name="Shibata K."/>
            <person name="Shiraki T."/>
            <person name="Suzuki S."/>
            <person name="Tagami M."/>
            <person name="Waki K."/>
            <person name="Watahiki A."/>
            <person name="Okamura-Oho Y."/>
            <person name="Suzuki H."/>
            <person name="Kawai J."/>
            <person name="Hayashizaki Y."/>
        </authorList>
    </citation>
    <scope>NUCLEOTIDE SEQUENCE [LARGE SCALE MRNA] (ISOFORM 1)</scope>
    <source>
        <strain>C57BL/6J</strain>
        <tissue>Small intestine</tissue>
    </source>
</reference>
<reference key="2">
    <citation type="journal article" date="2009" name="PLoS Biol.">
        <title>Lineage-specific biology revealed by a finished genome assembly of the mouse.</title>
        <authorList>
            <person name="Church D.M."/>
            <person name="Goodstadt L."/>
            <person name="Hillier L.W."/>
            <person name="Zody M.C."/>
            <person name="Goldstein S."/>
            <person name="She X."/>
            <person name="Bult C.J."/>
            <person name="Agarwala R."/>
            <person name="Cherry J.L."/>
            <person name="DiCuccio M."/>
            <person name="Hlavina W."/>
            <person name="Kapustin Y."/>
            <person name="Meric P."/>
            <person name="Maglott D."/>
            <person name="Birtle Z."/>
            <person name="Marques A.C."/>
            <person name="Graves T."/>
            <person name="Zhou S."/>
            <person name="Teague B."/>
            <person name="Potamousis K."/>
            <person name="Churas C."/>
            <person name="Place M."/>
            <person name="Herschleb J."/>
            <person name="Runnheim R."/>
            <person name="Forrest D."/>
            <person name="Amos-Landgraf J."/>
            <person name="Schwartz D.C."/>
            <person name="Cheng Z."/>
            <person name="Lindblad-Toh K."/>
            <person name="Eichler E.E."/>
            <person name="Ponting C.P."/>
        </authorList>
    </citation>
    <scope>NUCLEOTIDE SEQUENCE [LARGE SCALE GENOMIC DNA]</scope>
    <source>
        <strain>C57BL/6J</strain>
    </source>
</reference>
<reference key="3">
    <citation type="journal article" date="2004" name="Genome Res.">
        <title>The status, quality, and expansion of the NIH full-length cDNA project: the Mammalian Gene Collection (MGC).</title>
        <authorList>
            <consortium name="The MGC Project Team"/>
        </authorList>
    </citation>
    <scope>NUCLEOTIDE SEQUENCE [LARGE SCALE MRNA] (ISOFORM 2)</scope>
    <source>
        <tissue>Eye</tissue>
    </source>
</reference>
<reference key="4">
    <citation type="journal article" date="2013" name="Nat. Commun.">
        <title>ALKBH4-dependent demethylation of actin regulates actomyosin dynamics.</title>
        <authorList>
            <person name="Li M.M."/>
            <person name="Nilsen A."/>
            <person name="Shi Y."/>
            <person name="Fusser M."/>
            <person name="Ding Y.H."/>
            <person name="Fu Y."/>
            <person name="Liu B."/>
            <person name="Niu Y."/>
            <person name="Wu Y.S."/>
            <person name="Huang C.M."/>
            <person name="Olofsson M."/>
            <person name="Jin K.X."/>
            <person name="Lv Y."/>
            <person name="Xu X.Z."/>
            <person name="He C."/>
            <person name="Dong M.Q."/>
            <person name="Rendtlew Danielsen J.M."/>
            <person name="Klungland A."/>
            <person name="Yang Y.G."/>
        </authorList>
    </citation>
    <scope>DISRUPTION PHENOTYPE</scope>
</reference>
<reference key="5">
    <citation type="journal article" date="2014" name="PLoS ONE">
        <title>ALKBH4 depletion in mice leads to spermatogenic defects.</title>
        <authorList>
            <person name="Nilsen A."/>
            <person name="Fusser M."/>
            <person name="Greggains G."/>
            <person name="Fedorcsak P."/>
            <person name="Klungland A."/>
        </authorList>
    </citation>
    <scope>DISRUPTION PHENOTYPE</scope>
    <scope>SUBCELLULAR LOCATION</scope>
</reference>
<reference key="6">
    <citation type="journal article" date="2019" name="Mol. Cell">
        <title>An adversarial DNA N6-methyladenine-sensor network preserves Polycomb silencing.</title>
        <authorList>
            <person name="Kweon S.M."/>
            <person name="Chen Y."/>
            <person name="Moon E."/>
            <person name="Kvederaviciute K."/>
            <person name="Klimasauskas S."/>
            <person name="Feldman D.E."/>
        </authorList>
    </citation>
    <scope>FUNCTION</scope>
    <scope>CATALYTIC ACTIVITY</scope>
</reference>
<feature type="initiator methionine" description="Removed" evidence="1">
    <location>
        <position position="1"/>
    </location>
</feature>
<feature type="chain" id="PRO_0000239282" description="Alpha-ketoglutarate-dependent dioxygenase alkB homolog 4">
    <location>
        <begin position="2"/>
        <end position="300"/>
    </location>
</feature>
<feature type="domain" description="Fe2OG dioxygenase" evidence="2">
    <location>
        <begin position="148"/>
        <end position="272"/>
    </location>
</feature>
<feature type="binding site" evidence="2">
    <location>
        <position position="167"/>
    </location>
    <ligand>
        <name>Fe cation</name>
        <dbReference type="ChEBI" id="CHEBI:24875"/>
    </ligand>
</feature>
<feature type="binding site" evidence="2">
    <location>
        <position position="169"/>
    </location>
    <ligand>
        <name>Fe cation</name>
        <dbReference type="ChEBI" id="CHEBI:24875"/>
    </ligand>
</feature>
<feature type="binding site" evidence="2">
    <location>
        <position position="252"/>
    </location>
    <ligand>
        <name>Fe cation</name>
        <dbReference type="ChEBI" id="CHEBI:24875"/>
    </ligand>
</feature>
<feature type="binding site" evidence="2">
    <location>
        <position position="263"/>
    </location>
    <ligand>
        <name>2-oxoglutarate</name>
        <dbReference type="ChEBI" id="CHEBI:16810"/>
    </ligand>
</feature>
<feature type="modified residue" description="N-acetylalanine" evidence="1">
    <location>
        <position position="2"/>
    </location>
</feature>
<feature type="splice variant" id="VSP_019129" description="In isoform 2." evidence="6">
    <location>
        <begin position="1"/>
        <end position="85"/>
    </location>
</feature>
<protein>
    <recommendedName>
        <fullName evidence="8">Alpha-ketoglutarate-dependent dioxygenase alkB homolog 4</fullName>
    </recommendedName>
    <alternativeName>
        <fullName evidence="7">Alkylated DNA repair protein alkB homolog 4</fullName>
    </alternativeName>
    <alternativeName>
        <fullName evidence="8">DNA N6-methyl adenine demethylase ALKBH4</fullName>
        <ecNumber evidence="5">1.14.11.51</ecNumber>
    </alternativeName>
    <alternativeName>
        <fullName evidence="8">Lysine-specific demethylase ALKBH4</fullName>
        <ecNumber evidence="1">1.14.11.-</ecNumber>
    </alternativeName>
</protein>
<accession>Q9D8F1</accession>
<accession>Q8R1Y9</accession>
<name>ALKB4_MOUSE</name>
<organism>
    <name type="scientific">Mus musculus</name>
    <name type="common">Mouse</name>
    <dbReference type="NCBI Taxonomy" id="10090"/>
    <lineage>
        <taxon>Eukaryota</taxon>
        <taxon>Metazoa</taxon>
        <taxon>Chordata</taxon>
        <taxon>Craniata</taxon>
        <taxon>Vertebrata</taxon>
        <taxon>Euteleostomi</taxon>
        <taxon>Mammalia</taxon>
        <taxon>Eutheria</taxon>
        <taxon>Euarchontoglires</taxon>
        <taxon>Glires</taxon>
        <taxon>Rodentia</taxon>
        <taxon>Myomorpha</taxon>
        <taxon>Muroidea</taxon>
        <taxon>Muridae</taxon>
        <taxon>Murinae</taxon>
        <taxon>Mus</taxon>
        <taxon>Mus</taxon>
    </lineage>
</organism>
<gene>
    <name evidence="7 9" type="primary">Alkbh4</name>
</gene>
<dbReference type="EC" id="1.14.11.51" evidence="5"/>
<dbReference type="EC" id="1.14.11.-" evidence="1"/>
<dbReference type="EMBL" id="AK008083">
    <property type="protein sequence ID" value="BAB25449.1"/>
    <property type="molecule type" value="mRNA"/>
</dbReference>
<dbReference type="EMBL" id="GL456122">
    <property type="status" value="NOT_ANNOTATED_CDS"/>
    <property type="molecule type" value="Genomic_DNA"/>
</dbReference>
<dbReference type="EMBL" id="BC022729">
    <property type="protein sequence ID" value="AAH22729.1"/>
    <property type="molecule type" value="mRNA"/>
</dbReference>
<dbReference type="CCDS" id="CCDS19753.1">
    <molecule id="Q9D8F1-2"/>
</dbReference>
<dbReference type="CCDS" id="CCDS84973.1">
    <molecule id="Q9D8F1-1"/>
</dbReference>
<dbReference type="RefSeq" id="NP_001334421.1">
    <molecule id="Q9D8F1-1"/>
    <property type="nucleotide sequence ID" value="NM_001347492.1"/>
</dbReference>
<dbReference type="RefSeq" id="NP_001346344.1">
    <molecule id="Q9D8F1-2"/>
    <property type="nucleotide sequence ID" value="NM_001359415.1"/>
</dbReference>
<dbReference type="RefSeq" id="NP_001346345.1">
    <molecule id="Q9D8F1-2"/>
    <property type="nucleotide sequence ID" value="NM_001359416.1"/>
</dbReference>
<dbReference type="RefSeq" id="NP_082346.1">
    <molecule id="Q9D8F1-2"/>
    <property type="nucleotide sequence ID" value="NM_028070.1"/>
</dbReference>
<dbReference type="RefSeq" id="XP_006504566.1">
    <property type="nucleotide sequence ID" value="XM_006504503.3"/>
</dbReference>
<dbReference type="RefSeq" id="XP_006504567.1">
    <property type="nucleotide sequence ID" value="XM_006504504.2"/>
</dbReference>
<dbReference type="RefSeq" id="XP_006504568.1">
    <molecule id="Q9D8F1-2"/>
    <property type="nucleotide sequence ID" value="XM_006504505.4"/>
</dbReference>
<dbReference type="RefSeq" id="XP_030110679.1">
    <molecule id="Q9D8F1-2"/>
    <property type="nucleotide sequence ID" value="XM_030254819.2"/>
</dbReference>
<dbReference type="SMR" id="Q9D8F1"/>
<dbReference type="FunCoup" id="Q9D8F1">
    <property type="interactions" value="949"/>
</dbReference>
<dbReference type="STRING" id="10090.ENSMUSP00000040403"/>
<dbReference type="PhosphoSitePlus" id="Q9D8F1"/>
<dbReference type="PaxDb" id="10090-ENSMUSP00000098134"/>
<dbReference type="ProteomicsDB" id="296022">
    <molecule id="Q9D8F1-1"/>
</dbReference>
<dbReference type="ProteomicsDB" id="296023">
    <molecule id="Q9D8F1-2"/>
</dbReference>
<dbReference type="Pumba" id="Q9D8F1"/>
<dbReference type="Antibodypedia" id="45707">
    <property type="antibodies" value="150 antibodies from 22 providers"/>
</dbReference>
<dbReference type="DNASU" id="72041"/>
<dbReference type="Ensembl" id="ENSMUST00000041100.4">
    <molecule id="Q9D8F1-1"/>
    <property type="protein sequence ID" value="ENSMUSP00000040403.4"/>
    <property type="gene ID" value="ENSMUSG00000039754.11"/>
</dbReference>
<dbReference type="Ensembl" id="ENSMUST00000100568.3">
    <molecule id="Q9D8F1-2"/>
    <property type="protein sequence ID" value="ENSMUSP00000098134.3"/>
    <property type="gene ID" value="ENSMUSG00000039754.11"/>
</dbReference>
<dbReference type="GeneID" id="72041"/>
<dbReference type="KEGG" id="mmu:72041"/>
<dbReference type="UCSC" id="uc009aaa.1">
    <molecule id="Q9D8F1-1"/>
    <property type="organism name" value="mouse"/>
</dbReference>
<dbReference type="AGR" id="MGI:1919291"/>
<dbReference type="CTD" id="54784"/>
<dbReference type="MGI" id="MGI:1919291">
    <property type="gene designation" value="Alkbh4"/>
</dbReference>
<dbReference type="VEuPathDB" id="HostDB:ENSMUSG00000039754"/>
<dbReference type="eggNOG" id="KOG3959">
    <property type="taxonomic scope" value="Eukaryota"/>
</dbReference>
<dbReference type="GeneTree" id="ENSGT00390000006344"/>
<dbReference type="HOGENOM" id="CLU_060545_0_0_1"/>
<dbReference type="InParanoid" id="Q9D8F1"/>
<dbReference type="OMA" id="MNTLRPC"/>
<dbReference type="OrthoDB" id="442860at2759"/>
<dbReference type="PhylomeDB" id="Q9D8F1"/>
<dbReference type="TreeFam" id="TF314885"/>
<dbReference type="BioGRID-ORCS" id="72041">
    <property type="hits" value="2 hits in 76 CRISPR screens"/>
</dbReference>
<dbReference type="PRO" id="PR:Q9D8F1"/>
<dbReference type="Proteomes" id="UP000000589">
    <property type="component" value="Chromosome 5"/>
</dbReference>
<dbReference type="RNAct" id="Q9D8F1">
    <property type="molecule type" value="protein"/>
</dbReference>
<dbReference type="Bgee" id="ENSMUSG00000039754">
    <property type="expression patterns" value="Expressed in lumbar dorsal root ganglion and 194 other cell types or tissues"/>
</dbReference>
<dbReference type="ExpressionAtlas" id="Q9D8F1">
    <property type="expression patterns" value="baseline and differential"/>
</dbReference>
<dbReference type="GO" id="GO:0070938">
    <property type="term" value="C:contractile ring"/>
    <property type="evidence" value="ECO:0000250"/>
    <property type="project" value="UniProtKB"/>
</dbReference>
<dbReference type="GO" id="GO:0005737">
    <property type="term" value="C:cytoplasm"/>
    <property type="evidence" value="ECO:0007669"/>
    <property type="project" value="UniProtKB-SubCell"/>
</dbReference>
<dbReference type="GO" id="GO:0030496">
    <property type="term" value="C:midbody"/>
    <property type="evidence" value="ECO:0000250"/>
    <property type="project" value="UniProtKB"/>
</dbReference>
<dbReference type="GO" id="GO:0005730">
    <property type="term" value="C:nucleolus"/>
    <property type="evidence" value="ECO:0007669"/>
    <property type="project" value="UniProtKB-SubCell"/>
</dbReference>
<dbReference type="GO" id="GO:0003779">
    <property type="term" value="F:actin binding"/>
    <property type="evidence" value="ECO:0000250"/>
    <property type="project" value="UniProtKB"/>
</dbReference>
<dbReference type="GO" id="GO:0035516">
    <property type="term" value="F:broad specificity oxidative DNA demethylase activity"/>
    <property type="evidence" value="ECO:0000314"/>
    <property type="project" value="UniProtKB"/>
</dbReference>
<dbReference type="GO" id="GO:0046872">
    <property type="term" value="F:metal ion binding"/>
    <property type="evidence" value="ECO:0007669"/>
    <property type="project" value="UniProtKB-KW"/>
</dbReference>
<dbReference type="GO" id="GO:0031032">
    <property type="term" value="P:actomyosin structure organization"/>
    <property type="evidence" value="ECO:0000250"/>
    <property type="project" value="UniProtKB"/>
</dbReference>
<dbReference type="GO" id="GO:0036090">
    <property type="term" value="P:cleavage furrow ingression"/>
    <property type="evidence" value="ECO:0000250"/>
    <property type="project" value="UniProtKB"/>
</dbReference>
<dbReference type="GO" id="GO:0070988">
    <property type="term" value="P:demethylation"/>
    <property type="evidence" value="ECO:0007669"/>
    <property type="project" value="InterPro"/>
</dbReference>
<dbReference type="GO" id="GO:0141137">
    <property type="term" value="P:positive regulation of gene expression, epigenetic"/>
    <property type="evidence" value="ECO:0000314"/>
    <property type="project" value="UniProtKB"/>
</dbReference>
<dbReference type="Gene3D" id="2.60.120.590">
    <property type="entry name" value="Alpha-ketoglutarate-dependent dioxygenase AlkB-like"/>
    <property type="match status" value="1"/>
</dbReference>
<dbReference type="InterPro" id="IPR037151">
    <property type="entry name" value="AlkB-like_sf"/>
</dbReference>
<dbReference type="InterPro" id="IPR032857">
    <property type="entry name" value="ALKBH4"/>
</dbReference>
<dbReference type="PANTHER" id="PTHR12463:SF0">
    <property type="entry name" value="ALPHA-KETOGLUTARATE-DEPENDENT DIOXYGENASE ALKB HOMOLOG 4"/>
    <property type="match status" value="1"/>
</dbReference>
<dbReference type="PANTHER" id="PTHR12463">
    <property type="entry name" value="OXYGENASE-RELATED"/>
    <property type="match status" value="1"/>
</dbReference>
<dbReference type="SUPFAM" id="SSF51197">
    <property type="entry name" value="Clavaminate synthase-like"/>
    <property type="match status" value="1"/>
</dbReference>
<sequence length="300" mass="33394">MAAAAEVSLLQECGCKGIRTCLICERQRHRDPPWQICLQKKCCFLYCPDTGWAAGAEGSDLEGWAFPFPGVTLIQDFVTPEEEAEMVRLMDCDPWKLSQSGRKKQDYGPKVNFRKQKLKMAGFQGLPGFSQKVVQRMGLYPGLEDFQPVEQCNLDYSPERGSAIDPHLDDAWLWGERLVSLNLLSATVVSMSPEAPGSLLLCSAPSVRPDAFEDSLVAPSRSVPCQEVEVAITVPRRSLLVLTGAARHQWTHAIHRRHIKARRVCATFRELSSEFLPGGKQQELGQELLQAALSFQGRPV</sequence>
<proteinExistence type="evidence at protein level"/>
<keyword id="KW-0007">Acetylation</keyword>
<keyword id="KW-0009">Actin-binding</keyword>
<keyword id="KW-0025">Alternative splicing</keyword>
<keyword id="KW-0156">Chromatin regulator</keyword>
<keyword id="KW-0963">Cytoplasm</keyword>
<keyword id="KW-0223">Dioxygenase</keyword>
<keyword id="KW-0408">Iron</keyword>
<keyword id="KW-0479">Metal-binding</keyword>
<keyword id="KW-0539">Nucleus</keyword>
<keyword id="KW-0560">Oxidoreductase</keyword>
<keyword id="KW-1185">Reference proteome</keyword>
<keyword id="KW-0804">Transcription</keyword>
<keyword id="KW-0805">Transcription regulation</keyword>